<feature type="chain" id="PRO_0000048191" description="Tubulin alpha-4 chain">
    <location>
        <begin position="1"/>
        <end position="61"/>
    </location>
</feature>
<feature type="region of interest" description="Disordered" evidence="3">
    <location>
        <begin position="35"/>
        <end position="61"/>
    </location>
</feature>
<feature type="compositionally biased region" description="Acidic residues" evidence="3">
    <location>
        <begin position="47"/>
        <end position="61"/>
    </location>
</feature>
<feature type="binding site" evidence="2">
    <location>
        <position position="11"/>
    </location>
    <ligand>
        <name>GTP</name>
        <dbReference type="ChEBI" id="CHEBI:37565"/>
    </ligand>
</feature>
<feature type="site" description="Involved in polymerization">
    <location>
        <position position="61"/>
    </location>
</feature>
<feature type="modified residue" description="N6-acetyllysine" evidence="1">
    <location>
        <position position="40"/>
    </location>
</feature>
<feature type="non-consecutive residues" evidence="4">
    <location>
        <begin position="46"/>
        <end position="47"/>
    </location>
</feature>
<sequence>MRECISIHIGQAGIQVGNACWELYCLEHGIQADGQMPGDKTIGGGDAEFDEGEDGDEGDEY</sequence>
<dbReference type="EC" id="3.6.5.-" evidence="2"/>
<dbReference type="EMBL" id="X63179">
    <property type="protein sequence ID" value="CAA44864.1"/>
    <property type="molecule type" value="mRNA"/>
</dbReference>
<dbReference type="EMBL" id="X63180">
    <property type="protein sequence ID" value="CAA44865.1"/>
    <property type="molecule type" value="mRNA"/>
</dbReference>
<dbReference type="SMR" id="P33626"/>
<dbReference type="STRING" id="4577.P33626"/>
<dbReference type="MaizeGDB" id="17141"/>
<dbReference type="eggNOG" id="KOG1376">
    <property type="taxonomic scope" value="Eukaryota"/>
</dbReference>
<dbReference type="HOGENOM" id="CLU_207403_1_0_1"/>
<dbReference type="InParanoid" id="P33626"/>
<dbReference type="Proteomes" id="UP000007305">
    <property type="component" value="Unplaced"/>
</dbReference>
<dbReference type="GO" id="GO:0005737">
    <property type="term" value="C:cytoplasm"/>
    <property type="evidence" value="ECO:0007669"/>
    <property type="project" value="UniProtKB-KW"/>
</dbReference>
<dbReference type="GO" id="GO:0005874">
    <property type="term" value="C:microtubule"/>
    <property type="evidence" value="ECO:0007669"/>
    <property type="project" value="UniProtKB-KW"/>
</dbReference>
<dbReference type="GO" id="GO:0005525">
    <property type="term" value="F:GTP binding"/>
    <property type="evidence" value="ECO:0007669"/>
    <property type="project" value="UniProtKB-KW"/>
</dbReference>
<dbReference type="GO" id="GO:0016787">
    <property type="term" value="F:hydrolase activity"/>
    <property type="evidence" value="ECO:0007669"/>
    <property type="project" value="UniProtKB-KW"/>
</dbReference>
<dbReference type="Gene3D" id="3.40.50.1440">
    <property type="entry name" value="Tubulin/FtsZ, GTPase domain"/>
    <property type="match status" value="1"/>
</dbReference>
<dbReference type="InterPro" id="IPR036525">
    <property type="entry name" value="Tubulin/FtsZ_GTPase_sf"/>
</dbReference>
<dbReference type="PANTHER" id="PTHR36527">
    <property type="entry name" value="OS01G0282866 PROTEIN"/>
    <property type="match status" value="1"/>
</dbReference>
<dbReference type="PANTHER" id="PTHR36527:SF6">
    <property type="entry name" value="TUBULIN_FTSZ GTPASE DOMAIN-CONTAINING PROTEIN"/>
    <property type="match status" value="1"/>
</dbReference>
<dbReference type="SUPFAM" id="SSF52490">
    <property type="entry name" value="Tubulin nucleotide-binding domain-like"/>
    <property type="match status" value="1"/>
</dbReference>
<name>TBA4_MAIZE</name>
<reference key="1">
    <citation type="journal article" date="1992" name="J. Mol. Biol.">
        <title>Alpha-tubulin gene family of maize (Zea mays L.). Evidence for two ancient alpha-tubulin genes in plants.</title>
        <authorList>
            <person name="Villemur R."/>
            <person name="Joyce C.M."/>
            <person name="Haas N.A."/>
            <person name="Goddard R.H."/>
            <person name="Kopczak S.D."/>
            <person name="Hussey P.J."/>
            <person name="Snustad D.P."/>
            <person name="Silflow C.D."/>
        </authorList>
    </citation>
    <scope>NUCLEOTIDE SEQUENCE [MRNA]</scope>
    <source>
        <strain>cv. B73</strain>
        <tissue>Shoot</tissue>
    </source>
</reference>
<evidence type="ECO:0000250" key="1"/>
<evidence type="ECO:0000250" key="2">
    <source>
        <dbReference type="UniProtKB" id="P68363"/>
    </source>
</evidence>
<evidence type="ECO:0000256" key="3">
    <source>
        <dbReference type="SAM" id="MobiDB-lite"/>
    </source>
</evidence>
<evidence type="ECO:0000305" key="4"/>
<gene>
    <name type="primary">TUBA4</name>
    <name type="synonym">TUA4</name>
</gene>
<accession>P33626</accession>
<protein>
    <recommendedName>
        <fullName>Tubulin alpha-4 chain</fullName>
        <ecNumber evidence="2">3.6.5.-</ecNumber>
    </recommendedName>
    <alternativeName>
        <fullName>Alpha-4-tubulin</fullName>
    </alternativeName>
</protein>
<organism>
    <name type="scientific">Zea mays</name>
    <name type="common">Maize</name>
    <dbReference type="NCBI Taxonomy" id="4577"/>
    <lineage>
        <taxon>Eukaryota</taxon>
        <taxon>Viridiplantae</taxon>
        <taxon>Streptophyta</taxon>
        <taxon>Embryophyta</taxon>
        <taxon>Tracheophyta</taxon>
        <taxon>Spermatophyta</taxon>
        <taxon>Magnoliopsida</taxon>
        <taxon>Liliopsida</taxon>
        <taxon>Poales</taxon>
        <taxon>Poaceae</taxon>
        <taxon>PACMAD clade</taxon>
        <taxon>Panicoideae</taxon>
        <taxon>Andropogonodae</taxon>
        <taxon>Andropogoneae</taxon>
        <taxon>Tripsacinae</taxon>
        <taxon>Zea</taxon>
    </lineage>
</organism>
<comment type="function">
    <text>Tubulin is the major constituent of microtubules, a cylinder consisting of laterally associated linear protofilaments composed of alpha- and beta-tubulin heterodimers. Microtubules grow by the addition of GTP-tubulin dimers to the microtubule end, where a stabilizing cap forms. Below the cap, tubulin dimers are in GDP-bound state, owing to GTPase activity of alpha-tubulin.</text>
</comment>
<comment type="catalytic activity">
    <reaction evidence="2">
        <text>GTP + H2O = GDP + phosphate + H(+)</text>
        <dbReference type="Rhea" id="RHEA:19669"/>
        <dbReference type="ChEBI" id="CHEBI:15377"/>
        <dbReference type="ChEBI" id="CHEBI:15378"/>
        <dbReference type="ChEBI" id="CHEBI:37565"/>
        <dbReference type="ChEBI" id="CHEBI:43474"/>
        <dbReference type="ChEBI" id="CHEBI:58189"/>
    </reaction>
    <physiologicalReaction direction="left-to-right" evidence="2">
        <dbReference type="Rhea" id="RHEA:19670"/>
    </physiologicalReaction>
</comment>
<comment type="cofactor">
    <cofactor evidence="2">
        <name>Mg(2+)</name>
        <dbReference type="ChEBI" id="CHEBI:18420"/>
    </cofactor>
</comment>
<comment type="subunit">
    <text>Dimer of alpha and beta chains. A typical microtubule is a hollow water-filled tube with an outer diameter of 25 nm and an inner diameter of 15 nM. Alpha-beta heterodimers associate head-to-tail to form protofilaments running lengthwise along the microtubule wall with the beta-tubulin subunit facing the microtubule plus end conferring a structural polarity. Microtubules usually have 13 protofilaments but different protofilament numbers can be found in some organisms and specialized cells.</text>
</comment>
<comment type="subcellular location">
    <subcellularLocation>
        <location>Cytoplasm</location>
        <location>Cytoskeleton</location>
    </subcellularLocation>
</comment>
<comment type="PTM">
    <text evidence="1">Undergoes a tyrosination/detyrosination cycle, the cyclic removal and re-addition of a C-terminal tyrosine residue by the enzymes tubulin tyrosine carboxypeptidase (TTCP) and tubulin tyrosine ligase (TTL), respectively.</text>
</comment>
<comment type="PTM">
    <text evidence="1">Acetylation of alpha chains at Lys-40 stabilizes microtubules and affects affinity and processivity of microtubule motors. This modification has a role in multiple cellular functions, ranging from cell motility, cell cycle progression or cell differentiation to intracellular trafficking and signaling (By similarity).</text>
</comment>
<comment type="similarity">
    <text evidence="4">Belongs to the tubulin family.</text>
</comment>
<proteinExistence type="inferred from homology"/>
<keyword id="KW-0007">Acetylation</keyword>
<keyword id="KW-0963">Cytoplasm</keyword>
<keyword id="KW-0206">Cytoskeleton</keyword>
<keyword id="KW-0342">GTP-binding</keyword>
<keyword id="KW-0378">Hydrolase</keyword>
<keyword id="KW-0493">Microtubule</keyword>
<keyword id="KW-0547">Nucleotide-binding</keyword>
<keyword id="KW-1185">Reference proteome</keyword>